<keyword id="KW-0687">Ribonucleoprotein</keyword>
<keyword id="KW-0689">Ribosomal protein</keyword>
<evidence type="ECO:0000255" key="1">
    <source>
        <dbReference type="HAMAP-Rule" id="MF_00291"/>
    </source>
</evidence>
<evidence type="ECO:0000256" key="2">
    <source>
        <dbReference type="SAM" id="MobiDB-lite"/>
    </source>
</evidence>
<evidence type="ECO:0000305" key="3"/>
<dbReference type="EMBL" id="CP000239">
    <property type="protein sequence ID" value="ABC99796.1"/>
    <property type="molecule type" value="Genomic_DNA"/>
</dbReference>
<dbReference type="RefSeq" id="WP_011430474.1">
    <property type="nucleotide sequence ID" value="NC_007775.1"/>
</dbReference>
<dbReference type="SMR" id="Q2JU28"/>
<dbReference type="STRING" id="321327.CYA_1638"/>
<dbReference type="KEGG" id="cya:CYA_1638"/>
<dbReference type="eggNOG" id="COG0052">
    <property type="taxonomic scope" value="Bacteria"/>
</dbReference>
<dbReference type="HOGENOM" id="CLU_040318_1_2_3"/>
<dbReference type="OrthoDB" id="9808036at2"/>
<dbReference type="Proteomes" id="UP000008818">
    <property type="component" value="Chromosome"/>
</dbReference>
<dbReference type="GO" id="GO:0022627">
    <property type="term" value="C:cytosolic small ribosomal subunit"/>
    <property type="evidence" value="ECO:0007669"/>
    <property type="project" value="TreeGrafter"/>
</dbReference>
<dbReference type="GO" id="GO:0003735">
    <property type="term" value="F:structural constituent of ribosome"/>
    <property type="evidence" value="ECO:0007669"/>
    <property type="project" value="InterPro"/>
</dbReference>
<dbReference type="GO" id="GO:0006412">
    <property type="term" value="P:translation"/>
    <property type="evidence" value="ECO:0007669"/>
    <property type="project" value="UniProtKB-UniRule"/>
</dbReference>
<dbReference type="CDD" id="cd01425">
    <property type="entry name" value="RPS2"/>
    <property type="match status" value="1"/>
</dbReference>
<dbReference type="FunFam" id="1.10.287.610:FF:000001">
    <property type="entry name" value="30S ribosomal protein S2"/>
    <property type="match status" value="1"/>
</dbReference>
<dbReference type="Gene3D" id="3.40.50.10490">
    <property type="entry name" value="Glucose-6-phosphate isomerase like protein, domain 1"/>
    <property type="match status" value="1"/>
</dbReference>
<dbReference type="Gene3D" id="1.10.287.610">
    <property type="entry name" value="Helix hairpin bin"/>
    <property type="match status" value="1"/>
</dbReference>
<dbReference type="HAMAP" id="MF_00291_B">
    <property type="entry name" value="Ribosomal_uS2_B"/>
    <property type="match status" value="1"/>
</dbReference>
<dbReference type="InterPro" id="IPR001865">
    <property type="entry name" value="Ribosomal_uS2"/>
</dbReference>
<dbReference type="InterPro" id="IPR005706">
    <property type="entry name" value="Ribosomal_uS2_bac/mit/plastid"/>
</dbReference>
<dbReference type="InterPro" id="IPR018130">
    <property type="entry name" value="Ribosomal_uS2_CS"/>
</dbReference>
<dbReference type="InterPro" id="IPR023591">
    <property type="entry name" value="Ribosomal_uS2_flav_dom_sf"/>
</dbReference>
<dbReference type="NCBIfam" id="TIGR01011">
    <property type="entry name" value="rpsB_bact"/>
    <property type="match status" value="1"/>
</dbReference>
<dbReference type="PANTHER" id="PTHR12534">
    <property type="entry name" value="30S RIBOSOMAL PROTEIN S2 PROKARYOTIC AND ORGANELLAR"/>
    <property type="match status" value="1"/>
</dbReference>
<dbReference type="PANTHER" id="PTHR12534:SF0">
    <property type="entry name" value="SMALL RIBOSOMAL SUBUNIT PROTEIN US2M"/>
    <property type="match status" value="1"/>
</dbReference>
<dbReference type="Pfam" id="PF00318">
    <property type="entry name" value="Ribosomal_S2"/>
    <property type="match status" value="1"/>
</dbReference>
<dbReference type="PRINTS" id="PR00395">
    <property type="entry name" value="RIBOSOMALS2"/>
</dbReference>
<dbReference type="SUPFAM" id="SSF52313">
    <property type="entry name" value="Ribosomal protein S2"/>
    <property type="match status" value="1"/>
</dbReference>
<dbReference type="PROSITE" id="PS00962">
    <property type="entry name" value="RIBOSOMAL_S2_1"/>
    <property type="match status" value="1"/>
</dbReference>
<dbReference type="PROSITE" id="PS00963">
    <property type="entry name" value="RIBOSOMAL_S2_2"/>
    <property type="match status" value="1"/>
</dbReference>
<sequence length="267" mass="30439">MSVVSLPQLLEAGVHFGHKASRWNPKMRPYIFAERNGIHIIDLVQTARYLNEAYEYVREGAEKGWRFLFVGTKRQAAGIIAHEATRCGSYYVNQRWLGGMLTNWATIKTRIDRLKEIEEMQSSGLLDRLPKQEAARLKRELAKLEKYLGGIKTMRKLPDAVIIVDQRREANAVQECIKLKIPIISLLDTNCDPDLSDVFIPSNDDAIRAIKLIVGKLADAIYEGRHGQLDTVEEDEYDYEGAMDMDLEDDILEDVEDEEEGDPEQGE</sequence>
<reference key="1">
    <citation type="journal article" date="2007" name="ISME J.">
        <title>Population level functional diversity in a microbial community revealed by comparative genomic and metagenomic analyses.</title>
        <authorList>
            <person name="Bhaya D."/>
            <person name="Grossman A.R."/>
            <person name="Steunou A.-S."/>
            <person name="Khuri N."/>
            <person name="Cohan F.M."/>
            <person name="Hamamura N."/>
            <person name="Melendrez M.C."/>
            <person name="Bateson M.M."/>
            <person name="Ward D.M."/>
            <person name="Heidelberg J.F."/>
        </authorList>
    </citation>
    <scope>NUCLEOTIDE SEQUENCE [LARGE SCALE GENOMIC DNA]</scope>
    <source>
        <strain>JA-3-3Ab</strain>
    </source>
</reference>
<protein>
    <recommendedName>
        <fullName evidence="1">Small ribosomal subunit protein uS2</fullName>
    </recommendedName>
    <alternativeName>
        <fullName evidence="3">30S ribosomal protein S2</fullName>
    </alternativeName>
</protein>
<comment type="similarity">
    <text evidence="1">Belongs to the universal ribosomal protein uS2 family.</text>
</comment>
<gene>
    <name evidence="1" type="primary">rpsB</name>
    <name evidence="1" type="synonym">rps2</name>
    <name type="ordered locus">CYA_1638</name>
</gene>
<accession>Q2JU28</accession>
<name>RS2_SYNJA</name>
<feature type="chain" id="PRO_1000004100" description="Small ribosomal subunit protein uS2">
    <location>
        <begin position="1"/>
        <end position="267"/>
    </location>
</feature>
<feature type="region of interest" description="Disordered" evidence="2">
    <location>
        <begin position="247"/>
        <end position="267"/>
    </location>
</feature>
<proteinExistence type="inferred from homology"/>
<organism>
    <name type="scientific">Synechococcus sp. (strain JA-3-3Ab)</name>
    <name type="common">Cyanobacteria bacterium Yellowstone A-Prime</name>
    <dbReference type="NCBI Taxonomy" id="321327"/>
    <lineage>
        <taxon>Bacteria</taxon>
        <taxon>Bacillati</taxon>
        <taxon>Cyanobacteriota</taxon>
        <taxon>Cyanophyceae</taxon>
        <taxon>Synechococcales</taxon>
        <taxon>Synechococcaceae</taxon>
        <taxon>Synechococcus</taxon>
    </lineage>
</organism>